<organism>
    <name type="scientific">Caldalkalibacillus mannanilyticus (strain DSM 16130 / CIP 109019 / JCM 10596 / AM-001)</name>
    <name type="common">Bacillus mannanilyticus</name>
    <dbReference type="NCBI Taxonomy" id="1236954"/>
    <lineage>
        <taxon>Bacteria</taxon>
        <taxon>Bacillati</taxon>
        <taxon>Bacillota</taxon>
        <taxon>Bacilli</taxon>
        <taxon>Bacillales</taxon>
        <taxon>Bacillaceae</taxon>
        <taxon>Caldalkalibacillus</taxon>
    </lineage>
</organism>
<name>MANB_CALM0</name>
<comment type="function">
    <text evidence="1">Could be involved in the degradation of glucomannan and catalyzes the endo hydrolysis of beta-1,4-linked mannan, galactomannan and glucomannan.</text>
</comment>
<comment type="catalytic activity">
    <reaction evidence="1">
        <text>Random hydrolysis of (1-&gt;4)-beta-D-mannosidic linkages in mannans, galactomannans and glucomannans.</text>
        <dbReference type="EC" id="3.2.1.78"/>
    </reaction>
</comment>
<comment type="subcellular location">
    <subcellularLocation>
        <location evidence="7">Secreted</location>
    </subcellularLocation>
</comment>
<comment type="miscellaneous">
    <text evidence="7">The production of the two beta-mannanases seems not to be caused by proteolytic cleavage.</text>
</comment>
<comment type="similarity">
    <text evidence="3 6">Belongs to the glycosyl hydrolase 26 family.</text>
</comment>
<sequence length="513" mass="58430">MKVYKKVAFVMAFIMFFSVLPTISMSSEANGAALSNPNANQTTKNVYSWLANLPNKSNKRVVSGHFGGYSDSTLAWIKQCARELTGKMPGILSCDYKNWQTRLYVADQISYGCNQELINFWNQGGLVTISVHMPNPGFHSGENYKTILPTSQFQNLTNHRTTEGRRWKDMLDKMADGLDELQNNGVTVLFRPLHEMNGEWFWWGAEGYNQFDQTRANAYISAWRDMYQYFTHERKLNNLIWVYSPDVYRDHVTSYYPGANYVDIVALDSYHPDPHSLTDQYNRMIALDKPFAFAEIGPPESMAGSFDYSNYIQAIKQKYPRTVYFLAWNDKWSPHNNRGAWDLFNDSWVVNRGEIDYGQSNPATVLYDFENNTLSWSGCEFTDGGPWTSNEWSANGTQSLKADVVLGNNSYHLQKTVNRNLSSFKNLEIKVSHSSWGNVGSGMTARVFVKTGSAWRWNAGEFCQFAGKRTTALSIDLTKVSNLHDVREIGVEYKAPANSNGKTAIYLDHVTVR</sequence>
<dbReference type="EC" id="3.2.1.78" evidence="1"/>
<dbReference type="EMBL" id="M31797">
    <property type="protein sequence ID" value="AAA22586.1"/>
    <property type="molecule type" value="Genomic_DNA"/>
</dbReference>
<dbReference type="PIR" id="A37219">
    <property type="entry name" value="A37219"/>
</dbReference>
<dbReference type="SMR" id="P16699"/>
<dbReference type="CAZy" id="CBM59">
    <property type="family name" value="Carbohydrate-Binding Module Family 59"/>
</dbReference>
<dbReference type="CAZy" id="GH26">
    <property type="family name" value="Glycoside Hydrolase Family 26"/>
</dbReference>
<dbReference type="GO" id="GO:0005576">
    <property type="term" value="C:extracellular region"/>
    <property type="evidence" value="ECO:0007669"/>
    <property type="project" value="UniProtKB-SubCell"/>
</dbReference>
<dbReference type="GO" id="GO:0016985">
    <property type="term" value="F:mannan endo-1,4-beta-mannosidase activity"/>
    <property type="evidence" value="ECO:0007669"/>
    <property type="project" value="UniProtKB-EC"/>
</dbReference>
<dbReference type="GO" id="GO:0000272">
    <property type="term" value="P:polysaccharide catabolic process"/>
    <property type="evidence" value="ECO:0007669"/>
    <property type="project" value="UniProtKB-KW"/>
</dbReference>
<dbReference type="GO" id="GO:0006080">
    <property type="term" value="P:substituted mannan metabolic process"/>
    <property type="evidence" value="ECO:0007669"/>
    <property type="project" value="InterPro"/>
</dbReference>
<dbReference type="Gene3D" id="2.60.120.260">
    <property type="entry name" value="Galactose-binding domain-like"/>
    <property type="match status" value="1"/>
</dbReference>
<dbReference type="Gene3D" id="3.20.20.80">
    <property type="entry name" value="Glycosidases"/>
    <property type="match status" value="1"/>
</dbReference>
<dbReference type="InterPro" id="IPR008979">
    <property type="entry name" value="Galactose-bd-like_sf"/>
</dbReference>
<dbReference type="InterPro" id="IPR022790">
    <property type="entry name" value="GH26_dom"/>
</dbReference>
<dbReference type="InterPro" id="IPR000805">
    <property type="entry name" value="Glyco_hydro_26"/>
</dbReference>
<dbReference type="InterPro" id="IPR017853">
    <property type="entry name" value="Glycoside_hydrolase_SF"/>
</dbReference>
<dbReference type="InterPro" id="IPR049475">
    <property type="entry name" value="Mann_GBD_bact"/>
</dbReference>
<dbReference type="PANTHER" id="PTHR40079:SF4">
    <property type="entry name" value="GH26 DOMAIN-CONTAINING PROTEIN-RELATED"/>
    <property type="match status" value="1"/>
</dbReference>
<dbReference type="PANTHER" id="PTHR40079">
    <property type="entry name" value="MANNAN ENDO-1,4-BETA-MANNOSIDASE E-RELATED"/>
    <property type="match status" value="1"/>
</dbReference>
<dbReference type="Pfam" id="PF02156">
    <property type="entry name" value="Glyco_hydro_26"/>
    <property type="match status" value="1"/>
</dbReference>
<dbReference type="Pfam" id="PF21253">
    <property type="entry name" value="Mann_GBD_bact"/>
    <property type="match status" value="1"/>
</dbReference>
<dbReference type="PRINTS" id="PR00739">
    <property type="entry name" value="GLHYDRLASE26"/>
</dbReference>
<dbReference type="SUPFAM" id="SSF51445">
    <property type="entry name" value="(Trans)glycosidases"/>
    <property type="match status" value="1"/>
</dbReference>
<dbReference type="SUPFAM" id="SSF49785">
    <property type="entry name" value="Galactose-binding domain-like"/>
    <property type="match status" value="1"/>
</dbReference>
<dbReference type="PROSITE" id="PS51764">
    <property type="entry name" value="GH26"/>
    <property type="match status" value="1"/>
</dbReference>
<feature type="signal peptide" evidence="4">
    <location>
        <begin position="1"/>
        <end position="26"/>
    </location>
</feature>
<feature type="chain" id="PRO_0000012169" description="Mannan endo-1,4-beta-mannosidase A">
    <location>
        <begin position="27"/>
        <end position="513"/>
    </location>
</feature>
<feature type="chain" id="PRO_0000012170" description="Mannan endo-1,4-beta-mannosidase B">
    <location>
        <begin position="27"/>
        <end position="365"/>
    </location>
</feature>
<feature type="domain" description="GH26" evidence="3">
    <location>
        <begin position="41"/>
        <end position="353"/>
    </location>
</feature>
<feature type="active site" description="Proton donor" evidence="2">
    <location>
        <position position="195"/>
    </location>
</feature>
<feature type="active site" description="Nucleophile" evidence="2">
    <location>
        <position position="295"/>
    </location>
</feature>
<feature type="binding site" evidence="2">
    <location>
        <position position="132"/>
    </location>
    <ligand>
        <name>substrate</name>
    </ligand>
</feature>
<feature type="binding site" evidence="2">
    <location>
        <position position="200"/>
    </location>
    <ligand>
        <name>substrate</name>
    </ligand>
</feature>
<feature type="binding site" evidence="2">
    <location>
        <position position="270"/>
    </location>
    <ligand>
        <name>substrate</name>
    </ligand>
</feature>
<feature type="binding site" evidence="2">
    <location>
        <begin position="429"/>
        <end position="430"/>
    </location>
    <ligand>
        <name>substrate</name>
    </ligand>
</feature>
<feature type="site" description="Plays an important role in maintaining the position of the catalytic nucleophile" evidence="2">
    <location>
        <position position="194"/>
    </location>
</feature>
<keyword id="KW-0119">Carbohydrate metabolism</keyword>
<keyword id="KW-0903">Direct protein sequencing</keyword>
<keyword id="KW-0326">Glycosidase</keyword>
<keyword id="KW-0378">Hydrolase</keyword>
<keyword id="KW-0624">Polysaccharide degradation</keyword>
<keyword id="KW-0964">Secreted</keyword>
<keyword id="KW-0732">Signal</keyword>
<proteinExistence type="evidence at protein level"/>
<evidence type="ECO:0000250" key="1">
    <source>
        <dbReference type="UniProtKB" id="O05512"/>
    </source>
</evidence>
<evidence type="ECO:0000250" key="2">
    <source>
        <dbReference type="UniProtKB" id="P49424"/>
    </source>
</evidence>
<evidence type="ECO:0000255" key="3">
    <source>
        <dbReference type="PROSITE-ProRule" id="PRU01100"/>
    </source>
</evidence>
<evidence type="ECO:0000269" key="4">
    <source>
    </source>
</evidence>
<evidence type="ECO:0000303" key="5">
    <source>
    </source>
</evidence>
<evidence type="ECO:0000305" key="6"/>
<evidence type="ECO:0000305" key="7">
    <source>
    </source>
</evidence>
<protein>
    <recommendedName>
        <fullName evidence="5">Mannan endo-1,4-beta-mannosidase A and B</fullName>
        <ecNumber evidence="1">3.2.1.78</ecNumber>
    </recommendedName>
    <alternativeName>
        <fullName evidence="5">1,4-beta-D-mannan mannanohydrolase</fullName>
    </alternativeName>
    <alternativeName>
        <fullName evidence="5">Beta-mannanase</fullName>
    </alternativeName>
    <alternativeName>
        <fullName evidence="5">Endo-1,4-mannanase</fullName>
    </alternativeName>
    <component>
        <recommendedName>
            <fullName>Mannan endo-1,4-beta-mannosidase A</fullName>
        </recommendedName>
    </component>
    <component>
        <recommendedName>
            <fullName>Mannan endo-1,4-beta-mannosidase B</fullName>
        </recommendedName>
    </component>
</protein>
<accession>P16699</accession>
<reference key="1">
    <citation type="journal article" date="1989" name="Appl. Environ. Microbiol.">
        <title>Two Bacillus beta-mannanases having different COOH termini are produced in Escherichia coli carrying pMAH5.</title>
        <authorList>
            <person name="Akino T."/>
            <person name="Kato C."/>
            <person name="Horikoshi K."/>
        </authorList>
    </citation>
    <scope>NUCLEOTIDE SEQUENCE [GENOMIC DNA]</scope>
    <scope>PARTIAL PROTEIN SEQUENCE</scope>
</reference>